<gene>
    <name evidence="1" type="primary">dusA</name>
    <name type="ordered locus">XAC4025</name>
</gene>
<feature type="chain" id="PRO_0000162079" description="tRNA-dihydrouridine(20/20a) synthase">
    <location>
        <begin position="1"/>
        <end position="334"/>
    </location>
</feature>
<feature type="active site" description="Proton donor" evidence="1">
    <location>
        <position position="101"/>
    </location>
</feature>
<feature type="binding site" evidence="1">
    <location>
        <begin position="18"/>
        <end position="20"/>
    </location>
    <ligand>
        <name>FMN</name>
        <dbReference type="ChEBI" id="CHEBI:58210"/>
    </ligand>
</feature>
<feature type="binding site" evidence="1">
    <location>
        <position position="71"/>
    </location>
    <ligand>
        <name>FMN</name>
        <dbReference type="ChEBI" id="CHEBI:58210"/>
    </ligand>
</feature>
<feature type="binding site" evidence="1">
    <location>
        <position position="140"/>
    </location>
    <ligand>
        <name>FMN</name>
        <dbReference type="ChEBI" id="CHEBI:58210"/>
    </ligand>
</feature>
<feature type="binding site" evidence="1">
    <location>
        <position position="172"/>
    </location>
    <ligand>
        <name>FMN</name>
        <dbReference type="ChEBI" id="CHEBI:58210"/>
    </ligand>
</feature>
<feature type="binding site" evidence="1">
    <location>
        <begin position="212"/>
        <end position="214"/>
    </location>
    <ligand>
        <name>FMN</name>
        <dbReference type="ChEBI" id="CHEBI:58210"/>
    </ligand>
</feature>
<feature type="binding site" evidence="1">
    <location>
        <begin position="234"/>
        <end position="235"/>
    </location>
    <ligand>
        <name>FMN</name>
        <dbReference type="ChEBI" id="CHEBI:58210"/>
    </ligand>
</feature>
<feature type="site" description="Interacts with tRNA" evidence="1">
    <location>
        <position position="98"/>
    </location>
</feature>
<feature type="site" description="Interacts with tRNA; defines subfamily-specific binding signature" evidence="1">
    <location>
        <position position="184"/>
    </location>
</feature>
<feature type="site" description="Interacts with tRNA" evidence="1">
    <location>
        <position position="187"/>
    </location>
</feature>
<feature type="site" description="Interacts with tRNA; defines subfamily-specific binding signature" evidence="1">
    <location>
        <position position="298"/>
    </location>
</feature>
<feature type="site" description="Interacts with tRNA; defines subfamily-specific binding signature" evidence="1">
    <location>
        <position position="301"/>
    </location>
</feature>
<organism>
    <name type="scientific">Xanthomonas axonopodis pv. citri (strain 306)</name>
    <dbReference type="NCBI Taxonomy" id="190486"/>
    <lineage>
        <taxon>Bacteria</taxon>
        <taxon>Pseudomonadati</taxon>
        <taxon>Pseudomonadota</taxon>
        <taxon>Gammaproteobacteria</taxon>
        <taxon>Lysobacterales</taxon>
        <taxon>Lysobacteraceae</taxon>
        <taxon>Xanthomonas</taxon>
    </lineage>
</organism>
<sequence>MTASTDRYAASLRLSVAPMMDWTDRHCRVFHRLLAPSARLYTEMVHANAVIHGDRARLIGFDPVEHPLALQLGGSDPALLAQAAAIAQEWGFDEINLNCGCPSDRVQAGRFGACLMREPALVAECVAAMCAATHLPITVKCRLGVDDDDDYALFARFVDQVVAAGAAMVVVHARNAWLKGLSPKENREVPPLRYDWAYRLKQERPGLPVVLNGGIVAVEPAIAHLQHADGVMLGRAAYHDPYVLHCLDAALNQRPEQPRESLLRAYQPYVESQLAQGLGLKHMTRHVLGLFHGQPGGRAFRQVLSEGAHRPGAGWELVEQALERTDTRSWRVVA</sequence>
<protein>
    <recommendedName>
        <fullName evidence="1">tRNA-dihydrouridine(20/20a) synthase</fullName>
        <ecNumber evidence="1">1.3.1.-</ecNumber>
        <ecNumber evidence="1">1.3.1.91</ecNumber>
    </recommendedName>
    <alternativeName>
        <fullName evidence="1">U20-specific dihydrouridine synthase</fullName>
        <shortName evidence="1">U20-specific Dus</shortName>
    </alternativeName>
    <alternativeName>
        <fullName evidence="1">tRNA-dihydrouridine synthase A</fullName>
    </alternativeName>
</protein>
<name>DUSA_XANAC</name>
<accession>Q8PFF8</accession>
<keyword id="KW-0285">Flavoprotein</keyword>
<keyword id="KW-0288">FMN</keyword>
<keyword id="KW-0521">NADP</keyword>
<keyword id="KW-0560">Oxidoreductase</keyword>
<keyword id="KW-0694">RNA-binding</keyword>
<keyword id="KW-0819">tRNA processing</keyword>
<keyword id="KW-0820">tRNA-binding</keyword>
<proteinExistence type="inferred from homology"/>
<evidence type="ECO:0000255" key="1">
    <source>
        <dbReference type="HAMAP-Rule" id="MF_02041"/>
    </source>
</evidence>
<dbReference type="EC" id="1.3.1.-" evidence="1"/>
<dbReference type="EC" id="1.3.1.91" evidence="1"/>
<dbReference type="EMBL" id="AE008923">
    <property type="protein sequence ID" value="AAM38860.1"/>
    <property type="molecule type" value="Genomic_DNA"/>
</dbReference>
<dbReference type="RefSeq" id="WP_011052680.1">
    <property type="nucleotide sequence ID" value="NC_003919.1"/>
</dbReference>
<dbReference type="SMR" id="Q8PFF8"/>
<dbReference type="GeneID" id="66913013"/>
<dbReference type="KEGG" id="xac:XAC4025"/>
<dbReference type="eggNOG" id="COG0042">
    <property type="taxonomic scope" value="Bacteria"/>
</dbReference>
<dbReference type="HOGENOM" id="CLU_013299_2_1_6"/>
<dbReference type="Proteomes" id="UP000000576">
    <property type="component" value="Chromosome"/>
</dbReference>
<dbReference type="GO" id="GO:0050660">
    <property type="term" value="F:flavin adenine dinucleotide binding"/>
    <property type="evidence" value="ECO:0007669"/>
    <property type="project" value="InterPro"/>
</dbReference>
<dbReference type="GO" id="GO:0010181">
    <property type="term" value="F:FMN binding"/>
    <property type="evidence" value="ECO:0007669"/>
    <property type="project" value="UniProtKB-UniRule"/>
</dbReference>
<dbReference type="GO" id="GO:0000049">
    <property type="term" value="F:tRNA binding"/>
    <property type="evidence" value="ECO:0007669"/>
    <property type="project" value="UniProtKB-UniRule"/>
</dbReference>
<dbReference type="GO" id="GO:0102264">
    <property type="term" value="F:tRNA-dihydrouridine20 synthase activity"/>
    <property type="evidence" value="ECO:0007669"/>
    <property type="project" value="UniProtKB-EC"/>
</dbReference>
<dbReference type="GO" id="GO:0102266">
    <property type="term" value="F:tRNA-dihydrouridine20a synthase activity"/>
    <property type="evidence" value="ECO:0007669"/>
    <property type="project" value="RHEA"/>
</dbReference>
<dbReference type="CDD" id="cd02801">
    <property type="entry name" value="DUS_like_FMN"/>
    <property type="match status" value="1"/>
</dbReference>
<dbReference type="Gene3D" id="1.20.120.1460">
    <property type="match status" value="1"/>
</dbReference>
<dbReference type="Gene3D" id="3.20.20.70">
    <property type="entry name" value="Aldolase class I"/>
    <property type="match status" value="1"/>
</dbReference>
<dbReference type="HAMAP" id="MF_02041">
    <property type="entry name" value="DusA_subfam"/>
    <property type="match status" value="1"/>
</dbReference>
<dbReference type="InterPro" id="IPR013785">
    <property type="entry name" value="Aldolase_TIM"/>
</dbReference>
<dbReference type="InterPro" id="IPR035587">
    <property type="entry name" value="DUS-like_FMN-bd"/>
</dbReference>
<dbReference type="InterPro" id="IPR001269">
    <property type="entry name" value="DUS_fam"/>
</dbReference>
<dbReference type="InterPro" id="IPR004653">
    <property type="entry name" value="DusA"/>
</dbReference>
<dbReference type="InterPro" id="IPR018517">
    <property type="entry name" value="tRNA_hU_synthase_CS"/>
</dbReference>
<dbReference type="NCBIfam" id="NF008774">
    <property type="entry name" value="PRK11815.1"/>
    <property type="match status" value="1"/>
</dbReference>
<dbReference type="NCBIfam" id="TIGR00742">
    <property type="entry name" value="yjbN"/>
    <property type="match status" value="1"/>
</dbReference>
<dbReference type="PANTHER" id="PTHR42907">
    <property type="entry name" value="FMN-LINKED OXIDOREDUCTASES SUPERFAMILY PROTEIN"/>
    <property type="match status" value="1"/>
</dbReference>
<dbReference type="PANTHER" id="PTHR42907:SF1">
    <property type="entry name" value="FMN-LINKED OXIDOREDUCTASES SUPERFAMILY PROTEIN"/>
    <property type="match status" value="1"/>
</dbReference>
<dbReference type="Pfam" id="PF01207">
    <property type="entry name" value="Dus"/>
    <property type="match status" value="1"/>
</dbReference>
<dbReference type="PIRSF" id="PIRSF006621">
    <property type="entry name" value="Dus"/>
    <property type="match status" value="1"/>
</dbReference>
<dbReference type="SUPFAM" id="SSF51395">
    <property type="entry name" value="FMN-linked oxidoreductases"/>
    <property type="match status" value="1"/>
</dbReference>
<dbReference type="PROSITE" id="PS01136">
    <property type="entry name" value="UPF0034"/>
    <property type="match status" value="1"/>
</dbReference>
<reference key="1">
    <citation type="journal article" date="2002" name="Nature">
        <title>Comparison of the genomes of two Xanthomonas pathogens with differing host specificities.</title>
        <authorList>
            <person name="da Silva A.C.R."/>
            <person name="Ferro J.A."/>
            <person name="Reinach F.C."/>
            <person name="Farah C.S."/>
            <person name="Furlan L.R."/>
            <person name="Quaggio R.B."/>
            <person name="Monteiro-Vitorello C.B."/>
            <person name="Van Sluys M.A."/>
            <person name="Almeida N.F. Jr."/>
            <person name="Alves L.M.C."/>
            <person name="do Amaral A.M."/>
            <person name="Bertolini M.C."/>
            <person name="Camargo L.E.A."/>
            <person name="Camarotte G."/>
            <person name="Cannavan F."/>
            <person name="Cardozo J."/>
            <person name="Chambergo F."/>
            <person name="Ciapina L.P."/>
            <person name="Cicarelli R.M.B."/>
            <person name="Coutinho L.L."/>
            <person name="Cursino-Santos J.R."/>
            <person name="El-Dorry H."/>
            <person name="Faria J.B."/>
            <person name="Ferreira A.J.S."/>
            <person name="Ferreira R.C.C."/>
            <person name="Ferro M.I.T."/>
            <person name="Formighieri E.F."/>
            <person name="Franco M.C."/>
            <person name="Greggio C.C."/>
            <person name="Gruber A."/>
            <person name="Katsuyama A.M."/>
            <person name="Kishi L.T."/>
            <person name="Leite R.P."/>
            <person name="Lemos E.G.M."/>
            <person name="Lemos M.V.F."/>
            <person name="Locali E.C."/>
            <person name="Machado M.A."/>
            <person name="Madeira A.M.B.N."/>
            <person name="Martinez-Rossi N.M."/>
            <person name="Martins E.C."/>
            <person name="Meidanis J."/>
            <person name="Menck C.F.M."/>
            <person name="Miyaki C.Y."/>
            <person name="Moon D.H."/>
            <person name="Moreira L.M."/>
            <person name="Novo M.T.M."/>
            <person name="Okura V.K."/>
            <person name="Oliveira M.C."/>
            <person name="Oliveira V.R."/>
            <person name="Pereira H.A."/>
            <person name="Rossi A."/>
            <person name="Sena J.A.D."/>
            <person name="Silva C."/>
            <person name="de Souza R.F."/>
            <person name="Spinola L.A.F."/>
            <person name="Takita M.A."/>
            <person name="Tamura R.E."/>
            <person name="Teixeira E.C."/>
            <person name="Tezza R.I.D."/>
            <person name="Trindade dos Santos M."/>
            <person name="Truffi D."/>
            <person name="Tsai S.M."/>
            <person name="White F.F."/>
            <person name="Setubal J.C."/>
            <person name="Kitajima J.P."/>
        </authorList>
    </citation>
    <scope>NUCLEOTIDE SEQUENCE [LARGE SCALE GENOMIC DNA]</scope>
    <source>
        <strain>306</strain>
    </source>
</reference>
<comment type="function">
    <text evidence="1">Catalyzes the synthesis of 5,6-dihydrouridine (D), a modified base found in the D-loop of most tRNAs, via the reduction of the C5-C6 double bond in target uridines. Specifically modifies U20 and U20a in tRNAs.</text>
</comment>
<comment type="catalytic activity">
    <reaction evidence="1">
        <text>5,6-dihydrouridine(20) in tRNA + NADP(+) = uridine(20) in tRNA + NADPH + H(+)</text>
        <dbReference type="Rhea" id="RHEA:53336"/>
        <dbReference type="Rhea" id="RHEA-COMP:13533"/>
        <dbReference type="Rhea" id="RHEA-COMP:13534"/>
        <dbReference type="ChEBI" id="CHEBI:15378"/>
        <dbReference type="ChEBI" id="CHEBI:57783"/>
        <dbReference type="ChEBI" id="CHEBI:58349"/>
        <dbReference type="ChEBI" id="CHEBI:65315"/>
        <dbReference type="ChEBI" id="CHEBI:74443"/>
        <dbReference type="EC" id="1.3.1.91"/>
    </reaction>
</comment>
<comment type="catalytic activity">
    <reaction evidence="1">
        <text>5,6-dihydrouridine(20) in tRNA + NAD(+) = uridine(20) in tRNA + NADH + H(+)</text>
        <dbReference type="Rhea" id="RHEA:53340"/>
        <dbReference type="Rhea" id="RHEA-COMP:13533"/>
        <dbReference type="Rhea" id="RHEA-COMP:13534"/>
        <dbReference type="ChEBI" id="CHEBI:15378"/>
        <dbReference type="ChEBI" id="CHEBI:57540"/>
        <dbReference type="ChEBI" id="CHEBI:57945"/>
        <dbReference type="ChEBI" id="CHEBI:65315"/>
        <dbReference type="ChEBI" id="CHEBI:74443"/>
        <dbReference type="EC" id="1.3.1.91"/>
    </reaction>
</comment>
<comment type="catalytic activity">
    <reaction evidence="1">
        <text>5,6-dihydrouridine(20a) in tRNA + NADP(+) = uridine(20a) in tRNA + NADPH + H(+)</text>
        <dbReference type="Rhea" id="RHEA:53344"/>
        <dbReference type="Rhea" id="RHEA-COMP:13535"/>
        <dbReference type="Rhea" id="RHEA-COMP:13536"/>
        <dbReference type="ChEBI" id="CHEBI:15378"/>
        <dbReference type="ChEBI" id="CHEBI:57783"/>
        <dbReference type="ChEBI" id="CHEBI:58349"/>
        <dbReference type="ChEBI" id="CHEBI:65315"/>
        <dbReference type="ChEBI" id="CHEBI:74443"/>
    </reaction>
</comment>
<comment type="catalytic activity">
    <reaction evidence="1">
        <text>5,6-dihydrouridine(20a) in tRNA + NAD(+) = uridine(20a) in tRNA + NADH + H(+)</text>
        <dbReference type="Rhea" id="RHEA:53348"/>
        <dbReference type="Rhea" id="RHEA-COMP:13535"/>
        <dbReference type="Rhea" id="RHEA-COMP:13536"/>
        <dbReference type="ChEBI" id="CHEBI:15378"/>
        <dbReference type="ChEBI" id="CHEBI:57540"/>
        <dbReference type="ChEBI" id="CHEBI:57945"/>
        <dbReference type="ChEBI" id="CHEBI:65315"/>
        <dbReference type="ChEBI" id="CHEBI:74443"/>
    </reaction>
</comment>
<comment type="cofactor">
    <cofactor evidence="1">
        <name>FMN</name>
        <dbReference type="ChEBI" id="CHEBI:58210"/>
    </cofactor>
</comment>
<comment type="similarity">
    <text evidence="1">Belongs to the Dus family. DusA subfamily.</text>
</comment>